<comment type="subcellular location">
    <subcellularLocation>
        <location evidence="1">Cytoplasm</location>
    </subcellularLocation>
</comment>
<comment type="similarity">
    <text evidence="1">Belongs to the TACO1 family. YeeN subfamily.</text>
</comment>
<sequence length="239" mass="26358">MGRKWNNIKDKKASKDANTSRIYAKFGREIYVAAKQGEPDPESNQALRVVLERAKTYNVPRTIIDRAVEKAKGGSEENYDELRYEGFGPNGAMVIVDTLTNNVNRTAADVRAAFSKNSGNMGVNGSVAYMFDATAVIGLEGKTSDEVLEILMEADVDARDILEEEDAVIVYAEPDQFHAVQSALKDAGVEEFTVAELTMLAQNDVTLPEDAQAQFEKMVDALEDLEDVQQVYHNVDLGE</sequence>
<protein>
    <recommendedName>
        <fullName evidence="1">Probable transcriptional regulatory protein BCE33L0449</fullName>
    </recommendedName>
</protein>
<gene>
    <name type="ordered locus">BCE33L0449</name>
</gene>
<organism>
    <name type="scientific">Bacillus cereus (strain ZK / E33L)</name>
    <dbReference type="NCBI Taxonomy" id="288681"/>
    <lineage>
        <taxon>Bacteria</taxon>
        <taxon>Bacillati</taxon>
        <taxon>Bacillota</taxon>
        <taxon>Bacilli</taxon>
        <taxon>Bacillales</taxon>
        <taxon>Bacillaceae</taxon>
        <taxon>Bacillus</taxon>
        <taxon>Bacillus cereus group</taxon>
    </lineage>
</organism>
<dbReference type="EMBL" id="CP000001">
    <property type="protein sequence ID" value="AAU19791.1"/>
    <property type="molecule type" value="Genomic_DNA"/>
</dbReference>
<dbReference type="RefSeq" id="WP_000532948.1">
    <property type="nucleotide sequence ID" value="NZ_CP009968.1"/>
</dbReference>
<dbReference type="SMR" id="Q63GA5"/>
<dbReference type="KEGG" id="bcz:BCE33L0449"/>
<dbReference type="PATRIC" id="fig|288681.22.peg.5150"/>
<dbReference type="Proteomes" id="UP000002612">
    <property type="component" value="Chromosome"/>
</dbReference>
<dbReference type="GO" id="GO:0005829">
    <property type="term" value="C:cytosol"/>
    <property type="evidence" value="ECO:0007669"/>
    <property type="project" value="TreeGrafter"/>
</dbReference>
<dbReference type="GO" id="GO:0003677">
    <property type="term" value="F:DNA binding"/>
    <property type="evidence" value="ECO:0007669"/>
    <property type="project" value="UniProtKB-UniRule"/>
</dbReference>
<dbReference type="GO" id="GO:0006355">
    <property type="term" value="P:regulation of DNA-templated transcription"/>
    <property type="evidence" value="ECO:0007669"/>
    <property type="project" value="UniProtKB-UniRule"/>
</dbReference>
<dbReference type="FunFam" id="1.10.10.200:FF:000003">
    <property type="entry name" value="Probable transcriptional regulatory protein YeeN"/>
    <property type="match status" value="1"/>
</dbReference>
<dbReference type="FunFam" id="3.30.70.980:FF:000004">
    <property type="entry name" value="Probable transcriptional regulatory protein YeeN"/>
    <property type="match status" value="1"/>
</dbReference>
<dbReference type="Gene3D" id="1.10.10.200">
    <property type="match status" value="1"/>
</dbReference>
<dbReference type="Gene3D" id="3.30.70.980">
    <property type="match status" value="2"/>
</dbReference>
<dbReference type="HAMAP" id="MF_00693">
    <property type="entry name" value="Transcrip_reg_TACO1"/>
    <property type="match status" value="1"/>
</dbReference>
<dbReference type="HAMAP" id="MF_00918">
    <property type="entry name" value="Transcrip_reg_TACO1_YeeN"/>
    <property type="match status" value="1"/>
</dbReference>
<dbReference type="InterPro" id="IPR017856">
    <property type="entry name" value="Integrase-like_N"/>
</dbReference>
<dbReference type="InterPro" id="IPR048300">
    <property type="entry name" value="TACO1_YebC-like_2nd/3rd_dom"/>
</dbReference>
<dbReference type="InterPro" id="IPR049083">
    <property type="entry name" value="TACO1_YebC_N"/>
</dbReference>
<dbReference type="InterPro" id="IPR002876">
    <property type="entry name" value="Transcrip_reg_TACO1-like"/>
</dbReference>
<dbReference type="InterPro" id="IPR026564">
    <property type="entry name" value="Transcrip_reg_TACO1-like_dom3"/>
</dbReference>
<dbReference type="InterPro" id="IPR026562">
    <property type="entry name" value="Transcrip_reg_TACO1_YeeN"/>
</dbReference>
<dbReference type="InterPro" id="IPR029072">
    <property type="entry name" value="YebC-like"/>
</dbReference>
<dbReference type="NCBIfam" id="NF001030">
    <property type="entry name" value="PRK00110.1"/>
    <property type="match status" value="1"/>
</dbReference>
<dbReference type="NCBIfam" id="NF009044">
    <property type="entry name" value="PRK12378.1"/>
    <property type="match status" value="1"/>
</dbReference>
<dbReference type="NCBIfam" id="TIGR01033">
    <property type="entry name" value="YebC/PmpR family DNA-binding transcriptional regulator"/>
    <property type="match status" value="1"/>
</dbReference>
<dbReference type="PANTHER" id="PTHR12532">
    <property type="entry name" value="TRANSLATIONAL ACTIVATOR OF CYTOCHROME C OXIDASE 1"/>
    <property type="match status" value="1"/>
</dbReference>
<dbReference type="PANTHER" id="PTHR12532:SF0">
    <property type="entry name" value="TRANSLATIONAL ACTIVATOR OF CYTOCHROME C OXIDASE 1"/>
    <property type="match status" value="1"/>
</dbReference>
<dbReference type="Pfam" id="PF20772">
    <property type="entry name" value="TACO1_YebC_N"/>
    <property type="match status" value="1"/>
</dbReference>
<dbReference type="Pfam" id="PF01709">
    <property type="entry name" value="Transcrip_reg"/>
    <property type="match status" value="1"/>
</dbReference>
<dbReference type="SUPFAM" id="SSF75625">
    <property type="entry name" value="YebC-like"/>
    <property type="match status" value="1"/>
</dbReference>
<evidence type="ECO:0000255" key="1">
    <source>
        <dbReference type="HAMAP-Rule" id="MF_00918"/>
    </source>
</evidence>
<accession>Q63GA5</accession>
<name>Y449_BACCZ</name>
<proteinExistence type="inferred from homology"/>
<feature type="chain" id="PRO_0000175755" description="Probable transcriptional regulatory protein BCE33L0449">
    <location>
        <begin position="1"/>
        <end position="239"/>
    </location>
</feature>
<reference key="1">
    <citation type="journal article" date="2006" name="J. Bacteriol.">
        <title>Pathogenomic sequence analysis of Bacillus cereus and Bacillus thuringiensis isolates closely related to Bacillus anthracis.</title>
        <authorList>
            <person name="Han C.S."/>
            <person name="Xie G."/>
            <person name="Challacombe J.F."/>
            <person name="Altherr M.R."/>
            <person name="Bhotika S.S."/>
            <person name="Bruce D."/>
            <person name="Campbell C.S."/>
            <person name="Campbell M.L."/>
            <person name="Chen J."/>
            <person name="Chertkov O."/>
            <person name="Cleland C."/>
            <person name="Dimitrijevic M."/>
            <person name="Doggett N.A."/>
            <person name="Fawcett J.J."/>
            <person name="Glavina T."/>
            <person name="Goodwin L.A."/>
            <person name="Hill K.K."/>
            <person name="Hitchcock P."/>
            <person name="Jackson P.J."/>
            <person name="Keim P."/>
            <person name="Kewalramani A.R."/>
            <person name="Longmire J."/>
            <person name="Lucas S."/>
            <person name="Malfatti S."/>
            <person name="McMurry K."/>
            <person name="Meincke L.J."/>
            <person name="Misra M."/>
            <person name="Moseman B.L."/>
            <person name="Mundt M."/>
            <person name="Munk A.C."/>
            <person name="Okinaka R.T."/>
            <person name="Parson-Quintana B."/>
            <person name="Reilly L.P."/>
            <person name="Richardson P."/>
            <person name="Robinson D.L."/>
            <person name="Rubin E."/>
            <person name="Saunders E."/>
            <person name="Tapia R."/>
            <person name="Tesmer J.G."/>
            <person name="Thayer N."/>
            <person name="Thompson L.S."/>
            <person name="Tice H."/>
            <person name="Ticknor L.O."/>
            <person name="Wills P.L."/>
            <person name="Brettin T.S."/>
            <person name="Gilna P."/>
        </authorList>
    </citation>
    <scope>NUCLEOTIDE SEQUENCE [LARGE SCALE GENOMIC DNA]</scope>
    <source>
        <strain>ZK / E33L</strain>
    </source>
</reference>
<keyword id="KW-0963">Cytoplasm</keyword>
<keyword id="KW-0238">DNA-binding</keyword>
<keyword id="KW-0804">Transcription</keyword>
<keyword id="KW-0805">Transcription regulation</keyword>